<dbReference type="EMBL" id="AM233362">
    <property type="protein sequence ID" value="CAJ80238.1"/>
    <property type="molecule type" value="Genomic_DNA"/>
</dbReference>
<dbReference type="RefSeq" id="WP_003017342.1">
    <property type="nucleotide sequence ID" value="NZ_CP009694.1"/>
</dbReference>
<dbReference type="SMR" id="Q2A1H8"/>
<dbReference type="KEGG" id="ftl:FTL_1799"/>
<dbReference type="Proteomes" id="UP000001944">
    <property type="component" value="Chromosome"/>
</dbReference>
<dbReference type="GO" id="GO:0005886">
    <property type="term" value="C:plasma membrane"/>
    <property type="evidence" value="ECO:0007669"/>
    <property type="project" value="UniProtKB-SubCell"/>
</dbReference>
<dbReference type="GO" id="GO:0045259">
    <property type="term" value="C:proton-transporting ATP synthase complex"/>
    <property type="evidence" value="ECO:0007669"/>
    <property type="project" value="UniProtKB-KW"/>
</dbReference>
<dbReference type="GO" id="GO:0046933">
    <property type="term" value="F:proton-transporting ATP synthase activity, rotational mechanism"/>
    <property type="evidence" value="ECO:0007669"/>
    <property type="project" value="UniProtKB-UniRule"/>
</dbReference>
<dbReference type="GO" id="GO:0046961">
    <property type="term" value="F:proton-transporting ATPase activity, rotational mechanism"/>
    <property type="evidence" value="ECO:0007669"/>
    <property type="project" value="TreeGrafter"/>
</dbReference>
<dbReference type="CDD" id="cd06503">
    <property type="entry name" value="ATP-synt_Fo_b"/>
    <property type="match status" value="1"/>
</dbReference>
<dbReference type="Gene3D" id="6.10.250.1580">
    <property type="match status" value="1"/>
</dbReference>
<dbReference type="HAMAP" id="MF_01398">
    <property type="entry name" value="ATP_synth_b_bprime"/>
    <property type="match status" value="1"/>
</dbReference>
<dbReference type="InterPro" id="IPR028987">
    <property type="entry name" value="ATP_synth_B-like_membr_sf"/>
</dbReference>
<dbReference type="InterPro" id="IPR002146">
    <property type="entry name" value="ATP_synth_b/b'su_bac/chlpt"/>
</dbReference>
<dbReference type="InterPro" id="IPR005864">
    <property type="entry name" value="ATP_synth_F0_bsu_bac"/>
</dbReference>
<dbReference type="InterPro" id="IPR050059">
    <property type="entry name" value="ATP_synthase_B_chain"/>
</dbReference>
<dbReference type="NCBIfam" id="TIGR01144">
    <property type="entry name" value="ATP_synt_b"/>
    <property type="match status" value="1"/>
</dbReference>
<dbReference type="NCBIfam" id="NF004411">
    <property type="entry name" value="PRK05759.1-2"/>
    <property type="match status" value="1"/>
</dbReference>
<dbReference type="PANTHER" id="PTHR33445:SF1">
    <property type="entry name" value="ATP SYNTHASE SUBUNIT B"/>
    <property type="match status" value="1"/>
</dbReference>
<dbReference type="PANTHER" id="PTHR33445">
    <property type="entry name" value="ATP SYNTHASE SUBUNIT B', CHLOROPLASTIC"/>
    <property type="match status" value="1"/>
</dbReference>
<dbReference type="Pfam" id="PF00430">
    <property type="entry name" value="ATP-synt_B"/>
    <property type="match status" value="1"/>
</dbReference>
<dbReference type="SUPFAM" id="SSF81573">
    <property type="entry name" value="F1F0 ATP synthase subunit B, membrane domain"/>
    <property type="match status" value="1"/>
</dbReference>
<accession>Q2A1H8</accession>
<keyword id="KW-0066">ATP synthesis</keyword>
<keyword id="KW-0997">Cell inner membrane</keyword>
<keyword id="KW-1003">Cell membrane</keyword>
<keyword id="KW-0138">CF(0)</keyword>
<keyword id="KW-0375">Hydrogen ion transport</keyword>
<keyword id="KW-0406">Ion transport</keyword>
<keyword id="KW-0472">Membrane</keyword>
<keyword id="KW-1185">Reference proteome</keyword>
<keyword id="KW-0812">Transmembrane</keyword>
<keyword id="KW-1133">Transmembrane helix</keyword>
<keyword id="KW-0813">Transport</keyword>
<feature type="chain" id="PRO_0000368489" description="ATP synthase subunit b">
    <location>
        <begin position="1"/>
        <end position="156"/>
    </location>
</feature>
<feature type="transmembrane region" description="Helical" evidence="1">
    <location>
        <begin position="5"/>
        <end position="27"/>
    </location>
</feature>
<reference key="1">
    <citation type="submission" date="2006-03" db="EMBL/GenBank/DDBJ databases">
        <title>Complete genome sequence of Francisella tularensis LVS (Live Vaccine Strain).</title>
        <authorList>
            <person name="Chain P."/>
            <person name="Larimer F."/>
            <person name="Land M."/>
            <person name="Stilwagen S."/>
            <person name="Larsson P."/>
            <person name="Bearden S."/>
            <person name="Chu M."/>
            <person name="Oyston P."/>
            <person name="Forsman M."/>
            <person name="Andersson S."/>
            <person name="Lindler L."/>
            <person name="Titball R."/>
            <person name="Garcia E."/>
        </authorList>
    </citation>
    <scope>NUCLEOTIDE SEQUENCE [LARGE SCALE GENOMIC DNA]</scope>
    <source>
        <strain>LVS</strain>
    </source>
</reference>
<organism>
    <name type="scientific">Francisella tularensis subsp. holarctica (strain LVS)</name>
    <dbReference type="NCBI Taxonomy" id="376619"/>
    <lineage>
        <taxon>Bacteria</taxon>
        <taxon>Pseudomonadati</taxon>
        <taxon>Pseudomonadota</taxon>
        <taxon>Gammaproteobacteria</taxon>
        <taxon>Thiotrichales</taxon>
        <taxon>Francisellaceae</taxon>
        <taxon>Francisella</taxon>
    </lineage>
</organism>
<evidence type="ECO:0000255" key="1">
    <source>
        <dbReference type="HAMAP-Rule" id="MF_01398"/>
    </source>
</evidence>
<protein>
    <recommendedName>
        <fullName evidence="1">ATP synthase subunit b</fullName>
    </recommendedName>
    <alternativeName>
        <fullName evidence="1">ATP synthase F(0) sector subunit b</fullName>
    </alternativeName>
    <alternativeName>
        <fullName evidence="1">ATPase subunit I</fullName>
    </alternativeName>
    <alternativeName>
        <fullName evidence="1">F-type ATPase subunit b</fullName>
        <shortName evidence="1">F-ATPase subunit b</shortName>
    </alternativeName>
</protein>
<proteinExistence type="inferred from homology"/>
<comment type="function">
    <text evidence="1">F(1)F(0) ATP synthase produces ATP from ADP in the presence of a proton or sodium gradient. F-type ATPases consist of two structural domains, F(1) containing the extramembraneous catalytic core and F(0) containing the membrane proton channel, linked together by a central stalk and a peripheral stalk. During catalysis, ATP synthesis in the catalytic domain of F(1) is coupled via a rotary mechanism of the central stalk subunits to proton translocation.</text>
</comment>
<comment type="function">
    <text evidence="1">Component of the F(0) channel, it forms part of the peripheral stalk, linking F(1) to F(0).</text>
</comment>
<comment type="subunit">
    <text evidence="1">F-type ATPases have 2 components, F(1) - the catalytic core - and F(0) - the membrane proton channel. F(1) has five subunits: alpha(3), beta(3), gamma(1), delta(1), epsilon(1). F(0) has three main subunits: a(1), b(2) and c(10-14). The alpha and beta chains form an alternating ring which encloses part of the gamma chain. F(1) is attached to F(0) by a central stalk formed by the gamma and epsilon chains, while a peripheral stalk is formed by the delta and b chains.</text>
</comment>
<comment type="subcellular location">
    <subcellularLocation>
        <location evidence="1">Cell inner membrane</location>
        <topology evidence="1">Single-pass membrane protein</topology>
    </subcellularLocation>
</comment>
<comment type="similarity">
    <text evidence="1">Belongs to the ATPase B chain family.</text>
</comment>
<name>ATPF_FRATH</name>
<sequence length="156" mass="17383">MDINITLIGQMITFAIFIGFTMKFVWPPLRKALEERREKIAEGLASADRASRELEVAKRQSAEILREAKAKATEIVENAYVRAHKVDEQAKEEAIAAADKIKSMAIAEIEQEKVKAKEQLKQELVNLAMAAASKIIAASVDEKASKKVLEDFVEKV</sequence>
<gene>
    <name evidence="1" type="primary">atpF</name>
    <name type="ordered locus">FTL_1799</name>
</gene>